<protein>
    <recommendedName>
        <fullName evidence="12">Carboxysome shell carbonic anhydrase</fullName>
        <shortName evidence="12">CsoSCA</shortName>
        <ecNumber evidence="2">4.2.1.1</ecNumber>
    </recommendedName>
    <alternativeName>
        <fullName evidence="11">Carbonic anhydrase</fullName>
        <shortName evidence="11">CA</shortName>
    </alternativeName>
    <alternativeName>
        <fullName evidence="10">Carboxysome shell protein CsoS3</fullName>
    </alternativeName>
</protein>
<organism>
    <name type="scientific">Halothiobacillus neapolitanus (strain ATCC 23641 / c2)</name>
    <name type="common">Thiobacillus neapolitanus</name>
    <dbReference type="NCBI Taxonomy" id="555778"/>
    <lineage>
        <taxon>Bacteria</taxon>
        <taxon>Pseudomonadati</taxon>
        <taxon>Pseudomonadota</taxon>
        <taxon>Gammaproteobacteria</taxon>
        <taxon>Chromatiales</taxon>
        <taxon>Halothiobacillaceae</taxon>
        <taxon>Halothiobacillus</taxon>
    </lineage>
</organism>
<gene>
    <name evidence="10" type="primary">csoS3</name>
    <name evidence="13" type="synonym">ORF1</name>
    <name type="ordered locus">Hneap_0919</name>
</gene>
<keyword id="KW-0002">3D-structure</keyword>
<keyword id="KW-1283">Bacterial microcompartment</keyword>
<keyword id="KW-0120">Carbon dioxide fixation</keyword>
<keyword id="KW-1282">Carboxysome</keyword>
<keyword id="KW-0456">Lyase</keyword>
<keyword id="KW-0479">Metal-binding</keyword>
<keyword id="KW-1185">Reference proteome</keyword>
<keyword id="KW-0862">Zinc</keyword>
<proteinExistence type="evidence at protein level"/>
<reference key="1">
    <citation type="journal article" date="1998" name="J. Bacteriol.">
        <title>Insertion mutation of the form I cbbL gene encoding ribulose bisphosphate carboxylase/oxygenase (RuBisCO) in Thiobacillus neapolitanus results in expression of form II RuBisCO, loss of carboxysomes, and an increased CO2 requirement for growth.</title>
        <authorList>
            <person name="Baker S.H."/>
            <person name="Jin S."/>
            <person name="Aldrich H.C."/>
            <person name="Howard G.T."/>
            <person name="Shively J.M."/>
        </authorList>
    </citation>
    <scope>NUCLEOTIDE SEQUENCE [GENOMIC DNA]</scope>
    <source>
        <strain>ATCC 23641 / c2</strain>
    </source>
</reference>
<reference key="2">
    <citation type="submission" date="2009-10" db="EMBL/GenBank/DDBJ databases">
        <title>Complete sequence of Halothiobacillus neapolitanus c2.</title>
        <authorList>
            <consortium name="US DOE Joint Genome Institute"/>
            <person name="Lucas S."/>
            <person name="Copeland A."/>
            <person name="Lapidus A."/>
            <person name="Glavina del Rio T."/>
            <person name="Tice H."/>
            <person name="Bruce D."/>
            <person name="Goodwin L."/>
            <person name="Pitluck S."/>
            <person name="Davenport K."/>
            <person name="Brettin T."/>
            <person name="Detter J.C."/>
            <person name="Han C."/>
            <person name="Tapia R."/>
            <person name="Larimer F."/>
            <person name="Land M."/>
            <person name="Hauser L."/>
            <person name="Kyrpides N."/>
            <person name="Mikhailova N."/>
            <person name="Kerfeld C."/>
            <person name="Cannon G."/>
            <person name="Heinhort S."/>
        </authorList>
    </citation>
    <scope>NUCLEOTIDE SEQUENCE [LARGE SCALE GENOMIC DNA]</scope>
    <source>
        <strain>ATCC 23641 / c2</strain>
    </source>
</reference>
<reference key="3">
    <citation type="journal article" date="2000" name="Arch. Microbiol.">
        <title>Identification and localization of the carboxysome peptide Csos3 and its corresponding gene in Thiobacillus neapolitanus.</title>
        <authorList>
            <person name="Baker S.H."/>
            <person name="Williams D.S."/>
            <person name="Aldrich H.C."/>
            <person name="Gambrell A.C."/>
            <person name="Shively J.M."/>
        </authorList>
    </citation>
    <scope>IDENTIFICATION</scope>
    <scope>SUBCELLULAR LOCATION</scope>
    <source>
        <strain>ATCC 23641 / c2</strain>
    </source>
</reference>
<reference key="4">
    <citation type="journal article" date="2004" name="J. Bacteriol.">
        <title>A novel evolutionary lineage of carbonic anhydrase (epsilon class) is a component of the carboxysome shell.</title>
        <authorList>
            <person name="So A.K."/>
            <person name="Espie G.S."/>
            <person name="Williams E.B."/>
            <person name="Shively J.M."/>
            <person name="Heinhorst S."/>
            <person name="Cannon G.C."/>
        </authorList>
    </citation>
    <scope>FUNCTION AS A CARBONIC ANHYDRASE</scope>
    <scope>CATALYTIC ACTIVITY</scope>
    <scope>ACTIVITY REGULATION</scope>
    <scope>SUBCELLULAR LOCATION</scope>
    <scope>SIMILARITY</scope>
</reference>
<reference key="5">
    <citation type="book" date="2006" name="Microbiology Monographs">
        <title>Carboxysomes and Carboxysome-like Inclusions.</title>
        <editorList>
            <person name="Shively J.M."/>
        </editorList>
        <authorList>
            <person name="Heinhorst S."/>
            <person name="Cannon G.C."/>
            <person name="Shively J.M."/>
        </authorList>
    </citation>
    <scope>FUNCTION</scope>
    <scope>PROTEIN ABUNDANCE</scope>
    <scope>SUBCELLULAR LOCATION</scope>
</reference>
<reference key="6">
    <citation type="journal article" date="2006" name="J. Bacteriol.">
        <title>Characterization of the carboxysomal carbonic anhydrase CsoSCA from Halothiobacillus neapolitanus.</title>
        <authorList>
            <person name="Heinhorst S."/>
            <person name="Williams E.B."/>
            <person name="Cai F."/>
            <person name="Murin C.D."/>
            <person name="Shively J.M."/>
            <person name="Cannon G.C."/>
        </authorList>
    </citation>
    <scope>FUNCTION</scope>
    <scope>CATALYTIC ACTIVITY</scope>
    <scope>COFACTOR</scope>
    <scope>BIOPHYSICOCHEMICAL PROPERTIES</scope>
    <scope>SUBCELLULAR LOCATION</scope>
    <scope>SIMILARITY</scope>
</reference>
<reference key="7">
    <citation type="journal article" date="2008" name="J. Biol. Chem.">
        <title>CO2 fixation kinetics of Halothiobacillus neapolitanus mutant carboxysomes lacking carbonic anhydrase suggest the shell acts as a diffusional barrier for CO2.</title>
        <authorList>
            <person name="Dou Z."/>
            <person name="Heinhorst S."/>
            <person name="Williams E.B."/>
            <person name="Murin C.D."/>
            <person name="Shively J.M."/>
            <person name="Cannon G.C."/>
        </authorList>
    </citation>
    <scope>FUNCTION</scope>
    <scope>SUBCELLULAR LOCATION</scope>
    <scope>DISRUPTION PHENOTYPE</scope>
    <source>
        <strain>ATCC 23641 / c2</strain>
    </source>
</reference>
<reference key="8">
    <citation type="journal article" date="2012" name="Proc. Natl. Acad. Sci. U.S.A.">
        <title>Modularity of a carbon-fixing protein organelle.</title>
        <authorList>
            <person name="Bonacci W."/>
            <person name="Teng P.K."/>
            <person name="Afonso B."/>
            <person name="Niederholtmeyer H."/>
            <person name="Grob P."/>
            <person name="Silver P.A."/>
            <person name="Savage D.F."/>
        </authorList>
    </citation>
    <scope>BIOTECHNOLOGY</scope>
    <source>
        <strain>ATCC 23641 / c2</strain>
    </source>
</reference>
<reference key="9">
    <citation type="journal article" date="2019" name="Nat. Microbiol.">
        <title>DABs are inorganic carbon pumps found throughout prokaryotic phyla.</title>
        <authorList>
            <person name="Desmarais J.J."/>
            <person name="Flamholz A.I."/>
            <person name="Blikstad C."/>
            <person name="Dugan E.J."/>
            <person name="Laughlin T.G."/>
            <person name="Oltrogge L.M."/>
            <person name="Chen A.W."/>
            <person name="Wetmore K."/>
            <person name="Diamond S."/>
            <person name="Wang J.Y."/>
            <person name="Savage D.F."/>
        </authorList>
    </citation>
    <scope>DISRUPTION PHENOTYPE</scope>
    <source>
        <strain>ATCC 23641 / c2</strain>
    </source>
</reference>
<reference key="10">
    <citation type="journal article" date="2020" name="Nat. Commun.">
        <title>Reprogramming bacterial protein organelles as a nanoreactor for hydrogen production.</title>
        <authorList>
            <person name="Li T."/>
            <person name="Jiang Q."/>
            <person name="Huang J."/>
            <person name="Aitchison C.M."/>
            <person name="Huang F."/>
            <person name="Yang M."/>
            <person name="Dykes G.F."/>
            <person name="He H.L."/>
            <person name="Wang Q."/>
            <person name="Sprick R.S."/>
            <person name="Cooper A.I."/>
            <person name="Liu L.N."/>
        </authorList>
    </citation>
    <scope>CARBOXYSOME ASSEMBLY</scope>
    <scope>BIOTECHNOLOGY</scope>
    <scope>DISRUPTION PHENOTYPE</scope>
</reference>
<reference evidence="17" key="11">
    <citation type="journal article" date="2006" name="J. Biol. Chem.">
        <title>The structure of beta-carbonic anhydrase from the carboxysomal shell reveals a distinct subclass with one active site for the price of two.</title>
        <authorList>
            <person name="Sawaya M.R."/>
            <person name="Cannon G.C."/>
            <person name="Heinhorst S."/>
            <person name="Tanaka S."/>
            <person name="Williams E.B."/>
            <person name="Yeates T.O."/>
            <person name="Kerfeld C.A."/>
        </authorList>
    </citation>
    <scope>X-RAY CRYSTALLOGRAPHY (2.20 ANGSTROMS) IN COMPLEX WITH ZINC</scope>
    <scope>POSSIBLE REACTION MECHANISM</scope>
    <scope>POSSIBLE ACTIVE SITE</scope>
    <scope>COFACTOR</scope>
    <scope>SUBUNIT</scope>
    <scope>SIMILARITY</scope>
</reference>
<sequence>MNTRNTRSKQRAPFGVSSSVKPRLDLIEQAPNPAYDRHPACITLPERTCRHPLTDLEANEQLGRCEDSVKNRFDRVIPFLQVVAGIPLGLDYVTRVQELAQSSLGHTLPEELLKDNWISGHNLKGIFGYATAKALTAATEQFSRKIMSEKDDSASAIGFFLDCGFHAVDISPCADGRLKGLLPYILRLPLTAFTYRKAYAGSMFDIEDDLAQWEKNELRRYREGVPNTADQPTRYLKIAVYHFSTSDPTHSGCAAHGSNDRAALEAALTQLMKFREAVENAHCCGASIDILLIGVDTDTDAIRVHIPDSKGFLNPYRYVDNTVTYAQTLHLAPDEARVIIHEAILNANRSDGWAKGNGVASEGMRRFIGQLLINNLSQIDYVVNRHGGRYPPNDIGHAERYISVGDGFDEVQIRNLAYYAHLDTVEENAIDVDVGIKIFTKLNLSRGLPIPIAIHYRYDPNVPGSRERTVVKARRIYNAIKERFSSLDEQNLLQFRLSVQAQDIGSPIEEVASA</sequence>
<evidence type="ECO:0000269" key="1">
    <source>
    </source>
</evidence>
<evidence type="ECO:0000269" key="2">
    <source>
    </source>
</evidence>
<evidence type="ECO:0000269" key="3">
    <source>
    </source>
</evidence>
<evidence type="ECO:0000269" key="4">
    <source>
    </source>
</evidence>
<evidence type="ECO:0000269" key="5">
    <source>
    </source>
</evidence>
<evidence type="ECO:0000269" key="6">
    <source>
    </source>
</evidence>
<evidence type="ECO:0000269" key="7">
    <source>
    </source>
</evidence>
<evidence type="ECO:0000269" key="8">
    <source>
    </source>
</evidence>
<evidence type="ECO:0000269" key="9">
    <source ref="5"/>
</evidence>
<evidence type="ECO:0000303" key="10">
    <source>
    </source>
</evidence>
<evidence type="ECO:0000303" key="11">
    <source>
    </source>
</evidence>
<evidence type="ECO:0000303" key="12">
    <source>
    </source>
</evidence>
<evidence type="ECO:0000303" key="13">
    <source>
    </source>
</evidence>
<evidence type="ECO:0000305" key="14">
    <source>
    </source>
</evidence>
<evidence type="ECO:0000305" key="15">
    <source>
    </source>
</evidence>
<evidence type="ECO:0000305" key="16">
    <source>
    </source>
</evidence>
<evidence type="ECO:0007744" key="17">
    <source>
        <dbReference type="PDB" id="2FGY"/>
    </source>
</evidence>
<evidence type="ECO:0007829" key="18">
    <source>
        <dbReference type="PDB" id="2FGY"/>
    </source>
</evidence>
<evidence type="ECO:0007829" key="19">
    <source>
        <dbReference type="PDB" id="7SMK"/>
    </source>
</evidence>
<comment type="function">
    <text evidence="2 4 5 9 14">Reversible hydration of carbon dioxide (PubMed:14729686, PubMed:17012396, PubMed:18258595). Essential for chemolithotrophic carbon dioxide fixation, supplies CO(2) to RuBisCO (ribulose bisphosphate carboxylase, cbbL-cbbS) in the carboxysome (Probable) (PubMed:18258595). There are estimated to be 40 CsoSCA dimers per carboxysome (Ref.5).</text>
</comment>
<comment type="function">
    <text evidence="8">Unlike beta-carboxysomes, alpha-carboxysomes (Cb) can form without cargo protein. CsoS2 is essential for Cb formation and is also capable of targeting foreign proteins to the Cb. The Cb shell assembles with the aid of CsoS2; CsoS1A, CsoS1B and CsoS1C form the majority of the shell while CsoS4A and CsoS4B form vertices. CsoS1D forms pseudohexamers that probably control metabolite flux into and out of the shell.</text>
</comment>
<comment type="catalytic activity">
    <reaction evidence="2 4">
        <text>hydrogencarbonate + H(+) = CO2 + H2O</text>
        <dbReference type="Rhea" id="RHEA:10748"/>
        <dbReference type="ChEBI" id="CHEBI:15377"/>
        <dbReference type="ChEBI" id="CHEBI:15378"/>
        <dbReference type="ChEBI" id="CHEBI:16526"/>
        <dbReference type="ChEBI" id="CHEBI:17544"/>
        <dbReference type="EC" id="4.2.1.1"/>
    </reaction>
</comment>
<comment type="cofactor">
    <cofactor evidence="3 4 17">
        <name>Zn(2+)</name>
        <dbReference type="ChEBI" id="CHEBI:29105"/>
    </cofactor>
    <text evidence="3 17">The fourth ligand is a water molecule. Binds 1 Zn(2+) per monomer, in PDB:2FGY a second Zn(2+) is seen, but one of its ligands is an accidentally introduced mutation.</text>
</comment>
<comment type="activity regulation">
    <text evidence="2 4">Carbonic anhydrase activity is inhibited by ethoxyzolamide, dithiothreitol, cyanide, and divalent metal chelators dipicolinic acid and nitrilotriacetic acid.</text>
</comment>
<comment type="biophysicochemical properties">
    <kinetics>
        <KM evidence="4">3.2 mM for CO(2)</KM>
        <KM evidence="4">9.3 mM for hydrogencarbonate</KM>
        <text evidence="4">kcat is 8.9 x 10(4) sec(-1) for CO(2) hydration at pH 8.0, and 4.6 x 10(4) sec(-1) for hydrogencarbonate dehydration at pH 7.0.</text>
    </kinetics>
    <phDependence>
        <text evidence="4">Optimum pH is 8.0-8.5 for CO(2) hydration, and pH 6.0 for hydrogencarbonate dehydration.</text>
    </phDependence>
</comment>
<comment type="subunit">
    <text evidence="3">Homodimer, may form filaments.</text>
</comment>
<comment type="subcellular location">
    <subcellularLocation>
        <location evidence="1 2 4 5">Carboxysome</location>
    </subcellularLocation>
    <text evidence="1 2 5 9">Coomassie staining of gels and immunogold staining shows this is a minor shell protein (PubMed:10816046, PubMed:14729686). The protein is probably found inside the carboxysome, as its addition to mutant organelles does not complement the deletion (PubMed:18258595). This cyanobacterium makes alpha-type carboxysomes (PubMed:18258595, Ref.5).</text>
</comment>
<comment type="domain">
    <text evidence="3">The N-terminal domain is physically isolated from the rest of the protein and may serve to anchor the protein to the carboxysome shell or to RuBisCO; in PDB:2FGY the N-terminal domain binds Zn(2+) which is thought to be non-physiological. The central domain bears the catalytic Zn(2+), while the C-terminal domain is structurally similar to the central catalytic domain but cannot bind Zn(2+).</text>
</comment>
<comment type="disruption phenotype">
    <text evidence="5 7 8">Cells do not grow in normal air but do grow on 5% CO(2), called a high-CO(2) requiring phenotype, hcr. Loss of CA activity, requires 3.5 X more inorganic carbon for half-maximal CO(2) fixation. Carboxysomes are approximately normal except that ratio of CsoS2A:CsoS2B shifts from 1:1 to 2:1. Required for growth in ambient air (PubMed:31406332).</text>
</comment>
<comment type="biotechnology">
    <text evidence="6 8">Expression of 10 genes for alpha-carboxysome (Cb) proteins (cbbL-cbbS-csoS2-csoS3-csoS4A-csoS4B-csoS1C-csoS1A-csoS1B-csoS1D) in E.coli generates compartments that resemble Cb, contain RuBisCO and have its catalytic activity, showing it is possible to make artificial, functional Cb using these 10 genes. Cargo proteins can be targeted to these organelles (PubMed:22184212). Artificial Cb assembly in E.coli requires csoS2-csoS4A-csoS4B-csoS1C-csoS1A-csoS1B-csoS1D (but not the gene for carbonic anhydrase, csoS3). Targeting proteins to the organelle requires at least one of the CsoS2 C-repeats; 3 repeats gives the best localization. A nanoreactor of the Cb shell proteins has been engineered which generates H(2) using a ferredoxin-hydrogenase fusion (AC P07839-Q9FYU1) and a flavodoxin/ferredoxin--NADP reductase (AC A0A0K3QZA5) targeted separately to the Cb; the hydrogenase has first to be matured and activated by HydGXEF (AC Q8EAH9, Q8EAH8, Q8EAH7 and Q8EAH6 respectively). Encapsulation increases H(2) production about 20% during anaerobic growth, and over 4-fold more during aerobic growth (PubMed:33116131).</text>
</comment>
<comment type="similarity">
    <text evidence="14 15 16">Belongs to the beta-class carbonic anhydrase family. CsoSCA subfamily.</text>
</comment>
<dbReference type="EC" id="4.2.1.1" evidence="2"/>
<dbReference type="EMBL" id="AF038430">
    <property type="protein sequence ID" value="AAC32552.1"/>
    <property type="molecule type" value="Genomic_DNA"/>
</dbReference>
<dbReference type="EMBL" id="CP001801">
    <property type="protein sequence ID" value="ACX95762.1"/>
    <property type="molecule type" value="Genomic_DNA"/>
</dbReference>
<dbReference type="RefSeq" id="WP_012823798.1">
    <property type="nucleotide sequence ID" value="NC_013422.1"/>
</dbReference>
<dbReference type="PDB" id="2FGY">
    <property type="method" value="X-ray"/>
    <property type="resolution" value="2.20 A"/>
    <property type="chains" value="A/B=1-514"/>
</dbReference>
<dbReference type="PDB" id="7SMK">
    <property type="method" value="EM"/>
    <property type="resolution" value="1.98 A"/>
    <property type="chains" value="C=1-50"/>
</dbReference>
<dbReference type="PDB" id="7SNV">
    <property type="method" value="EM"/>
    <property type="resolution" value="2.07 A"/>
    <property type="chains" value="C=1-50"/>
</dbReference>
<dbReference type="PDBsum" id="2FGY"/>
<dbReference type="PDBsum" id="7SMK"/>
<dbReference type="PDBsum" id="7SNV"/>
<dbReference type="EMDB" id="EMD-25201"/>
<dbReference type="EMDB" id="EMD-25228"/>
<dbReference type="SMR" id="O85042"/>
<dbReference type="STRING" id="555778.Hneap_0919"/>
<dbReference type="KEGG" id="hna:Hneap_0919"/>
<dbReference type="eggNOG" id="ENOG502Z9V7">
    <property type="taxonomic scope" value="Bacteria"/>
</dbReference>
<dbReference type="HOGENOM" id="CLU_535194_0_0_6"/>
<dbReference type="OrthoDB" id="544846at2"/>
<dbReference type="EvolutionaryTrace" id="O85042"/>
<dbReference type="Proteomes" id="UP000009102">
    <property type="component" value="Chromosome"/>
</dbReference>
<dbReference type="GO" id="GO:0031470">
    <property type="term" value="C:carboxysome"/>
    <property type="evidence" value="ECO:0007669"/>
    <property type="project" value="UniProtKB-SubCell"/>
</dbReference>
<dbReference type="GO" id="GO:0004089">
    <property type="term" value="F:carbonate dehydratase activity"/>
    <property type="evidence" value="ECO:0007669"/>
    <property type="project" value="UniProtKB-EC"/>
</dbReference>
<dbReference type="GO" id="GO:0046872">
    <property type="term" value="F:metal ion binding"/>
    <property type="evidence" value="ECO:0007669"/>
    <property type="project" value="UniProtKB-KW"/>
</dbReference>
<dbReference type="GO" id="GO:0015977">
    <property type="term" value="P:carbon fixation"/>
    <property type="evidence" value="ECO:0007669"/>
    <property type="project" value="UniProtKB-KW"/>
</dbReference>
<dbReference type="Gene3D" id="3.30.1330.140">
    <property type="entry name" value="Carboxysome Shell Carbonic Anhydrase, C-terminal domain"/>
    <property type="match status" value="1"/>
</dbReference>
<dbReference type="Gene3D" id="1.20.120.1310">
    <property type="entry name" value="Carboxysome Shell Carbonic Anhydrase, N-terminal helical domain"/>
    <property type="match status" value="1"/>
</dbReference>
<dbReference type="InterPro" id="IPR014074">
    <property type="entry name" value="Carboxysome_shell_carb_anhy"/>
</dbReference>
<dbReference type="InterPro" id="IPR048620">
    <property type="entry name" value="CsoSCA_C"/>
</dbReference>
<dbReference type="InterPro" id="IPR043066">
    <property type="entry name" value="CsoSCA_C_sf"/>
</dbReference>
<dbReference type="InterPro" id="IPR048539">
    <property type="entry name" value="CsoSCA_cat"/>
</dbReference>
<dbReference type="InterPro" id="IPR048619">
    <property type="entry name" value="CsoSCA_N"/>
</dbReference>
<dbReference type="InterPro" id="IPR043065">
    <property type="entry name" value="CsoSCA_N_sf"/>
</dbReference>
<dbReference type="NCBIfam" id="TIGR02701">
    <property type="entry name" value="shell_carb_anhy"/>
    <property type="match status" value="1"/>
</dbReference>
<dbReference type="Pfam" id="PF08936">
    <property type="entry name" value="CsoSCA_C"/>
    <property type="match status" value="1"/>
</dbReference>
<dbReference type="Pfam" id="PF20686">
    <property type="entry name" value="CsoSCA_cat"/>
    <property type="match status" value="1"/>
</dbReference>
<dbReference type="Pfam" id="PF20687">
    <property type="entry name" value="CsoSCA_N"/>
    <property type="match status" value="1"/>
</dbReference>
<feature type="chain" id="PRO_0000452062" description="Carboxysome shell carbonic anhydrase">
    <location>
        <begin position="1"/>
        <end position="514"/>
    </location>
</feature>
<feature type="region of interest" description="N-terminal domain" evidence="15 17">
    <location>
        <begin position="1"/>
        <end position="144"/>
    </location>
</feature>
<feature type="region of interest" description="Catalytic domain" evidence="15 17">
    <location>
        <begin position="151"/>
        <end position="397"/>
    </location>
</feature>
<feature type="region of interest" description="C-terminal domain" evidence="15 17">
    <location>
        <begin position="398"/>
        <end position="514"/>
    </location>
</feature>
<feature type="active site" description="Proton acceptor" evidence="15">
    <location>
        <position position="175"/>
    </location>
</feature>
<feature type="binding site" evidence="3 17">
    <location>
        <position position="173"/>
    </location>
    <ligand>
        <name>Zn(2+)</name>
        <dbReference type="ChEBI" id="CHEBI:29105"/>
        <note>catalytic</note>
    </ligand>
</feature>
<feature type="binding site" evidence="3 17">
    <location>
        <position position="242"/>
    </location>
    <ligand>
        <name>Zn(2+)</name>
        <dbReference type="ChEBI" id="CHEBI:29105"/>
        <note>catalytic</note>
    </ligand>
</feature>
<feature type="binding site" evidence="3 17">
    <location>
        <position position="253"/>
    </location>
    <ligand>
        <name>Zn(2+)</name>
        <dbReference type="ChEBI" id="CHEBI:29105"/>
        <note>catalytic</note>
    </ligand>
</feature>
<feature type="sequence conflict" description="In Ref. 1; AAC32552." ref="1">
    <original>F</original>
    <variation>C</variation>
    <location>
        <position position="14"/>
    </location>
</feature>
<feature type="sequence conflict" description="In Ref. 1; AAC32552." ref="1">
    <original>A</original>
    <variation>V</variation>
    <location>
        <position position="34"/>
    </location>
</feature>
<feature type="sequence conflict" description="In Ref. 1; AAC32552." ref="1">
    <original>K</original>
    <variation>T</variation>
    <location>
        <position position="437"/>
    </location>
</feature>
<feature type="helix" evidence="19">
    <location>
        <begin position="23"/>
        <end position="26"/>
    </location>
</feature>
<feature type="turn" evidence="18">
    <location>
        <begin position="42"/>
        <end position="46"/>
    </location>
</feature>
<feature type="helix" evidence="18">
    <location>
        <begin position="56"/>
        <end position="74"/>
    </location>
</feature>
<feature type="helix" evidence="18">
    <location>
        <begin position="76"/>
        <end position="85"/>
    </location>
</feature>
<feature type="strand" evidence="18">
    <location>
        <begin position="88"/>
        <end position="90"/>
    </location>
</feature>
<feature type="helix" evidence="18">
    <location>
        <begin position="93"/>
        <end position="104"/>
    </location>
</feature>
<feature type="helix" evidence="18">
    <location>
        <begin position="110"/>
        <end position="112"/>
    </location>
</feature>
<feature type="turn" evidence="18">
    <location>
        <begin position="117"/>
        <end position="119"/>
    </location>
</feature>
<feature type="helix" evidence="18">
    <location>
        <begin position="123"/>
        <end position="141"/>
    </location>
</feature>
<feature type="helix" evidence="18">
    <location>
        <begin position="152"/>
        <end position="163"/>
    </location>
</feature>
<feature type="strand" evidence="18">
    <location>
        <begin position="165"/>
        <end position="174"/>
    </location>
</feature>
<feature type="helix" evidence="18">
    <location>
        <begin position="176"/>
        <end position="178"/>
    </location>
</feature>
<feature type="helix" evidence="18">
    <location>
        <begin position="181"/>
        <end position="186"/>
    </location>
</feature>
<feature type="strand" evidence="18">
    <location>
        <begin position="194"/>
        <end position="196"/>
    </location>
</feature>
<feature type="helix" evidence="18">
    <location>
        <begin position="200"/>
        <end position="202"/>
    </location>
</feature>
<feature type="helix" evidence="18">
    <location>
        <begin position="206"/>
        <end position="223"/>
    </location>
</feature>
<feature type="strand" evidence="18">
    <location>
        <begin position="234"/>
        <end position="243"/>
    </location>
</feature>
<feature type="strand" evidence="18">
    <location>
        <begin position="245"/>
        <end position="247"/>
    </location>
</feature>
<feature type="turn" evidence="18">
    <location>
        <begin position="248"/>
        <end position="250"/>
    </location>
</feature>
<feature type="helix" evidence="18">
    <location>
        <begin position="254"/>
        <end position="256"/>
    </location>
</feature>
<feature type="helix" evidence="18">
    <location>
        <begin position="260"/>
        <end position="281"/>
    </location>
</feature>
<feature type="strand" evidence="18">
    <location>
        <begin position="288"/>
        <end position="296"/>
    </location>
</feature>
<feature type="turn" evidence="18">
    <location>
        <begin position="297"/>
        <end position="299"/>
    </location>
</feature>
<feature type="strand" evidence="18">
    <location>
        <begin position="302"/>
        <end position="305"/>
    </location>
</feature>
<feature type="strand" evidence="18">
    <location>
        <begin position="318"/>
        <end position="320"/>
    </location>
</feature>
<feature type="helix" evidence="18">
    <location>
        <begin position="321"/>
        <end position="328"/>
    </location>
</feature>
<feature type="helix" evidence="18">
    <location>
        <begin position="333"/>
        <end position="348"/>
    </location>
</feature>
<feature type="helix" evidence="18">
    <location>
        <begin position="352"/>
        <end position="354"/>
    </location>
</feature>
<feature type="helix" evidence="18">
    <location>
        <begin position="362"/>
        <end position="386"/>
    </location>
</feature>
<feature type="strand" evidence="18">
    <location>
        <begin position="387"/>
        <end position="389"/>
    </location>
</feature>
<feature type="helix" evidence="18">
    <location>
        <begin position="392"/>
        <end position="394"/>
    </location>
</feature>
<feature type="strand" evidence="18">
    <location>
        <begin position="400"/>
        <end position="406"/>
    </location>
</feature>
<feature type="turn" evidence="18">
    <location>
        <begin position="414"/>
        <end position="416"/>
    </location>
</feature>
<feature type="strand" evidence="18">
    <location>
        <begin position="417"/>
        <end position="421"/>
    </location>
</feature>
<feature type="helix" evidence="18">
    <location>
        <begin position="426"/>
        <end position="428"/>
    </location>
</feature>
<feature type="helix" evidence="18">
    <location>
        <begin position="429"/>
        <end position="442"/>
    </location>
</feature>
<feature type="helix" evidence="18">
    <location>
        <begin position="444"/>
        <end position="446"/>
    </location>
</feature>
<feature type="strand" evidence="18">
    <location>
        <begin position="450"/>
        <end position="458"/>
    </location>
</feature>
<feature type="helix" evidence="18">
    <location>
        <begin position="465"/>
        <end position="483"/>
    </location>
</feature>
<feature type="helix" evidence="18">
    <location>
        <begin position="485"/>
        <end position="489"/>
    </location>
</feature>
<feature type="strand" evidence="18">
    <location>
        <begin position="493"/>
        <end position="503"/>
    </location>
</feature>
<feature type="strand" evidence="18">
    <location>
        <begin position="508"/>
        <end position="511"/>
    </location>
</feature>
<name>CSOCA_HALNC</name>
<accession>O85042</accession>
<accession>D0KZ89</accession>